<accession>Q3ANG3</accession>
<organism>
    <name type="scientific">Synechococcus sp. (strain CC9605)</name>
    <dbReference type="NCBI Taxonomy" id="110662"/>
    <lineage>
        <taxon>Bacteria</taxon>
        <taxon>Bacillati</taxon>
        <taxon>Cyanobacteriota</taxon>
        <taxon>Cyanophyceae</taxon>
        <taxon>Synechococcales</taxon>
        <taxon>Synechococcaceae</taxon>
        <taxon>Synechococcus</taxon>
    </lineage>
</organism>
<sequence>MPEAKPGLQLELLELLLVGAGAVPGALLRWQLALYLGDQNLLVNVLGAALLGFLSGLPAAPRRQLLLGIGFCGSVTTFSSWMLAAVKHLSAGDWAAALGLIGLTLGLGLGAAALGFNLGRRLKPPEPPQSPT</sequence>
<reference key="1">
    <citation type="submission" date="2005-07" db="EMBL/GenBank/DDBJ databases">
        <title>Complete sequence of Synechococcus sp. CC9605.</title>
        <authorList>
            <consortium name="US DOE Joint Genome Institute"/>
            <person name="Copeland A."/>
            <person name="Lucas S."/>
            <person name="Lapidus A."/>
            <person name="Barry K."/>
            <person name="Detter J.C."/>
            <person name="Glavina T."/>
            <person name="Hammon N."/>
            <person name="Israni S."/>
            <person name="Pitluck S."/>
            <person name="Schmutz J."/>
            <person name="Martinez M."/>
            <person name="Larimer F."/>
            <person name="Land M."/>
            <person name="Kyrpides N."/>
            <person name="Ivanova N."/>
            <person name="Richardson P."/>
        </authorList>
    </citation>
    <scope>NUCLEOTIDE SEQUENCE [LARGE SCALE GENOMIC DNA]</scope>
    <source>
        <strain>CC9605</strain>
    </source>
</reference>
<keyword id="KW-0997">Cell inner membrane</keyword>
<keyword id="KW-1003">Cell membrane</keyword>
<keyword id="KW-0407">Ion channel</keyword>
<keyword id="KW-0406">Ion transport</keyword>
<keyword id="KW-0472">Membrane</keyword>
<keyword id="KW-0479">Metal-binding</keyword>
<keyword id="KW-0915">Sodium</keyword>
<keyword id="KW-0812">Transmembrane</keyword>
<keyword id="KW-1133">Transmembrane helix</keyword>
<keyword id="KW-0813">Transport</keyword>
<name>FLUC2_SYNSC</name>
<feature type="chain" id="PRO_0000252951" description="Fluoride-specific ion channel FluC 2">
    <location>
        <begin position="1"/>
        <end position="132"/>
    </location>
</feature>
<feature type="transmembrane region" description="Helical" evidence="1">
    <location>
        <begin position="8"/>
        <end position="28"/>
    </location>
</feature>
<feature type="transmembrane region" description="Helical" evidence="1">
    <location>
        <begin position="41"/>
        <end position="61"/>
    </location>
</feature>
<feature type="transmembrane region" description="Helical" evidence="1">
    <location>
        <begin position="66"/>
        <end position="86"/>
    </location>
</feature>
<feature type="transmembrane region" description="Helical" evidence="1">
    <location>
        <begin position="96"/>
        <end position="116"/>
    </location>
</feature>
<feature type="binding site" evidence="1">
    <location>
        <position position="73"/>
    </location>
    <ligand>
        <name>Na(+)</name>
        <dbReference type="ChEBI" id="CHEBI:29101"/>
        <note>structural</note>
    </ligand>
</feature>
<feature type="binding site" evidence="1">
    <location>
        <position position="76"/>
    </location>
    <ligand>
        <name>Na(+)</name>
        <dbReference type="ChEBI" id="CHEBI:29101"/>
        <note>structural</note>
    </ligand>
</feature>
<comment type="function">
    <text evidence="1">Fluoride-specific ion channel. Important for reducing fluoride concentration in the cell, thus reducing its toxicity.</text>
</comment>
<comment type="catalytic activity">
    <reaction evidence="1">
        <text>fluoride(in) = fluoride(out)</text>
        <dbReference type="Rhea" id="RHEA:76159"/>
        <dbReference type="ChEBI" id="CHEBI:17051"/>
    </reaction>
    <physiologicalReaction direction="left-to-right" evidence="1">
        <dbReference type="Rhea" id="RHEA:76160"/>
    </physiologicalReaction>
</comment>
<comment type="activity regulation">
    <text evidence="1">Na(+) is not transported, but it plays an essential structural role and its presence is essential for fluoride channel function.</text>
</comment>
<comment type="subcellular location">
    <subcellularLocation>
        <location evidence="1">Cell inner membrane</location>
        <topology evidence="1">Multi-pass membrane protein</topology>
    </subcellularLocation>
</comment>
<comment type="similarity">
    <text evidence="1">Belongs to the fluoride channel Fluc/FEX (TC 1.A.43) family.</text>
</comment>
<gene>
    <name evidence="1" type="primary">fluC2</name>
    <name evidence="1" type="synonym">crcB2</name>
    <name type="ordered locus">Syncc9605_0090</name>
</gene>
<dbReference type="EMBL" id="CP000110">
    <property type="protein sequence ID" value="ABB33869.1"/>
    <property type="molecule type" value="Genomic_DNA"/>
</dbReference>
<dbReference type="RefSeq" id="WP_011363129.1">
    <property type="nucleotide sequence ID" value="NC_007516.1"/>
</dbReference>
<dbReference type="SMR" id="Q3ANG3"/>
<dbReference type="STRING" id="110662.Syncc9605_0090"/>
<dbReference type="KEGG" id="syd:Syncc9605_0090"/>
<dbReference type="eggNOG" id="COG0239">
    <property type="taxonomic scope" value="Bacteria"/>
</dbReference>
<dbReference type="HOGENOM" id="CLU_114342_2_1_3"/>
<dbReference type="OrthoDB" id="9815830at2"/>
<dbReference type="GO" id="GO:0005886">
    <property type="term" value="C:plasma membrane"/>
    <property type="evidence" value="ECO:0007669"/>
    <property type="project" value="UniProtKB-SubCell"/>
</dbReference>
<dbReference type="GO" id="GO:0062054">
    <property type="term" value="F:fluoride channel activity"/>
    <property type="evidence" value="ECO:0007669"/>
    <property type="project" value="UniProtKB-UniRule"/>
</dbReference>
<dbReference type="GO" id="GO:0046872">
    <property type="term" value="F:metal ion binding"/>
    <property type="evidence" value="ECO:0007669"/>
    <property type="project" value="UniProtKB-KW"/>
</dbReference>
<dbReference type="GO" id="GO:0140114">
    <property type="term" value="P:cellular detoxification of fluoride"/>
    <property type="evidence" value="ECO:0007669"/>
    <property type="project" value="UniProtKB-UniRule"/>
</dbReference>
<dbReference type="HAMAP" id="MF_00454">
    <property type="entry name" value="FluC"/>
    <property type="match status" value="1"/>
</dbReference>
<dbReference type="InterPro" id="IPR003691">
    <property type="entry name" value="FluC"/>
</dbReference>
<dbReference type="PANTHER" id="PTHR28259">
    <property type="entry name" value="FLUORIDE EXPORT PROTEIN 1-RELATED"/>
    <property type="match status" value="1"/>
</dbReference>
<dbReference type="PANTHER" id="PTHR28259:SF1">
    <property type="entry name" value="FLUORIDE EXPORT PROTEIN 1-RELATED"/>
    <property type="match status" value="1"/>
</dbReference>
<dbReference type="Pfam" id="PF02537">
    <property type="entry name" value="CRCB"/>
    <property type="match status" value="1"/>
</dbReference>
<protein>
    <recommendedName>
        <fullName evidence="1">Fluoride-specific ion channel FluC 2</fullName>
    </recommendedName>
</protein>
<evidence type="ECO:0000255" key="1">
    <source>
        <dbReference type="HAMAP-Rule" id="MF_00454"/>
    </source>
</evidence>
<proteinExistence type="inferred from homology"/>